<reference key="1">
    <citation type="submission" date="2006-10" db="EMBL/GenBank/DDBJ databases">
        <authorList>
            <person name="Fleischmann R.D."/>
            <person name="Dodson R.J."/>
            <person name="Haft D.H."/>
            <person name="Merkel J.S."/>
            <person name="Nelson W.C."/>
            <person name="Fraser C.M."/>
        </authorList>
    </citation>
    <scope>NUCLEOTIDE SEQUENCE [LARGE SCALE GENOMIC DNA]</scope>
    <source>
        <strain>104</strain>
    </source>
</reference>
<feature type="chain" id="PRO_1000050717" description="Large ribosomal subunit protein bL35">
    <location>
        <begin position="1"/>
        <end position="64"/>
    </location>
</feature>
<feature type="region of interest" description="Disordered" evidence="2">
    <location>
        <begin position="1"/>
        <end position="22"/>
    </location>
</feature>
<feature type="region of interest" description="Disordered" evidence="2">
    <location>
        <begin position="34"/>
        <end position="64"/>
    </location>
</feature>
<feature type="compositionally biased region" description="Basic and acidic residues" evidence="2">
    <location>
        <begin position="34"/>
        <end position="46"/>
    </location>
</feature>
<feature type="compositionally biased region" description="Polar residues" evidence="2">
    <location>
        <begin position="50"/>
        <end position="64"/>
    </location>
</feature>
<name>RL35_MYCA1</name>
<comment type="similarity">
    <text evidence="1">Belongs to the bacterial ribosomal protein bL35 family.</text>
</comment>
<keyword id="KW-0687">Ribonucleoprotein</keyword>
<keyword id="KW-0689">Ribosomal protein</keyword>
<accession>A0QHC2</accession>
<proteinExistence type="inferred from homology"/>
<sequence length="64" mass="7309">MPKAKTHSGASKRFRRTGTGKIVRQKTNRRHLLEHKPTTRTRRLEGRTTVSANDTKRVNSLLNG</sequence>
<organism>
    <name type="scientific">Mycobacterium avium (strain 104)</name>
    <dbReference type="NCBI Taxonomy" id="243243"/>
    <lineage>
        <taxon>Bacteria</taxon>
        <taxon>Bacillati</taxon>
        <taxon>Actinomycetota</taxon>
        <taxon>Actinomycetes</taxon>
        <taxon>Mycobacteriales</taxon>
        <taxon>Mycobacteriaceae</taxon>
        <taxon>Mycobacterium</taxon>
        <taxon>Mycobacterium avium complex (MAC)</taxon>
    </lineage>
</organism>
<dbReference type="EMBL" id="CP000479">
    <property type="protein sequence ID" value="ABK68440.1"/>
    <property type="molecule type" value="Genomic_DNA"/>
</dbReference>
<dbReference type="RefSeq" id="WP_003876267.1">
    <property type="nucleotide sequence ID" value="NC_008595.1"/>
</dbReference>
<dbReference type="SMR" id="A0QHC2"/>
<dbReference type="GeneID" id="75270528"/>
<dbReference type="KEGG" id="mav:MAV_3126"/>
<dbReference type="HOGENOM" id="CLU_169643_4_2_11"/>
<dbReference type="Proteomes" id="UP000001574">
    <property type="component" value="Chromosome"/>
</dbReference>
<dbReference type="GO" id="GO:0022625">
    <property type="term" value="C:cytosolic large ribosomal subunit"/>
    <property type="evidence" value="ECO:0007669"/>
    <property type="project" value="TreeGrafter"/>
</dbReference>
<dbReference type="GO" id="GO:0003735">
    <property type="term" value="F:structural constituent of ribosome"/>
    <property type="evidence" value="ECO:0007669"/>
    <property type="project" value="InterPro"/>
</dbReference>
<dbReference type="GO" id="GO:0006412">
    <property type="term" value="P:translation"/>
    <property type="evidence" value="ECO:0007669"/>
    <property type="project" value="UniProtKB-UniRule"/>
</dbReference>
<dbReference type="FunFam" id="4.10.410.60:FF:000001">
    <property type="entry name" value="50S ribosomal protein L35"/>
    <property type="match status" value="1"/>
</dbReference>
<dbReference type="Gene3D" id="4.10.410.60">
    <property type="match status" value="1"/>
</dbReference>
<dbReference type="HAMAP" id="MF_00514">
    <property type="entry name" value="Ribosomal_bL35"/>
    <property type="match status" value="1"/>
</dbReference>
<dbReference type="InterPro" id="IPR001706">
    <property type="entry name" value="Ribosomal_bL35"/>
</dbReference>
<dbReference type="InterPro" id="IPR021137">
    <property type="entry name" value="Ribosomal_bL35-like"/>
</dbReference>
<dbReference type="InterPro" id="IPR018265">
    <property type="entry name" value="Ribosomal_bL35_CS"/>
</dbReference>
<dbReference type="InterPro" id="IPR037229">
    <property type="entry name" value="Ribosomal_bL35_sf"/>
</dbReference>
<dbReference type="NCBIfam" id="TIGR00001">
    <property type="entry name" value="rpmI_bact"/>
    <property type="match status" value="1"/>
</dbReference>
<dbReference type="PANTHER" id="PTHR33343">
    <property type="entry name" value="54S RIBOSOMAL PROTEIN BL35M"/>
    <property type="match status" value="1"/>
</dbReference>
<dbReference type="PANTHER" id="PTHR33343:SF1">
    <property type="entry name" value="LARGE RIBOSOMAL SUBUNIT PROTEIN BL35M"/>
    <property type="match status" value="1"/>
</dbReference>
<dbReference type="Pfam" id="PF01632">
    <property type="entry name" value="Ribosomal_L35p"/>
    <property type="match status" value="1"/>
</dbReference>
<dbReference type="PRINTS" id="PR00064">
    <property type="entry name" value="RIBOSOMALL35"/>
</dbReference>
<dbReference type="SUPFAM" id="SSF143034">
    <property type="entry name" value="L35p-like"/>
    <property type="match status" value="1"/>
</dbReference>
<dbReference type="PROSITE" id="PS00936">
    <property type="entry name" value="RIBOSOMAL_L35"/>
    <property type="match status" value="1"/>
</dbReference>
<protein>
    <recommendedName>
        <fullName evidence="1">Large ribosomal subunit protein bL35</fullName>
    </recommendedName>
    <alternativeName>
        <fullName evidence="3">50S ribosomal protein L35</fullName>
    </alternativeName>
</protein>
<gene>
    <name evidence="1" type="primary">rpmI</name>
    <name type="ordered locus">MAV_3126</name>
</gene>
<evidence type="ECO:0000255" key="1">
    <source>
        <dbReference type="HAMAP-Rule" id="MF_00514"/>
    </source>
</evidence>
<evidence type="ECO:0000256" key="2">
    <source>
        <dbReference type="SAM" id="MobiDB-lite"/>
    </source>
</evidence>
<evidence type="ECO:0000305" key="3"/>